<organism>
    <name type="scientific">Moschus berezovskii</name>
    <name type="common">Chinese forest musk deer</name>
    <dbReference type="NCBI Taxonomy" id="68408"/>
    <lineage>
        <taxon>Eukaryota</taxon>
        <taxon>Metazoa</taxon>
        <taxon>Chordata</taxon>
        <taxon>Craniata</taxon>
        <taxon>Vertebrata</taxon>
        <taxon>Euteleostomi</taxon>
        <taxon>Mammalia</taxon>
        <taxon>Eutheria</taxon>
        <taxon>Laurasiatheria</taxon>
        <taxon>Artiodactyla</taxon>
        <taxon>Ruminantia</taxon>
        <taxon>Pecora</taxon>
        <taxon>Moschidae</taxon>
        <taxon>Moschus</taxon>
    </lineage>
</organism>
<proteinExistence type="evidence at transcript level"/>
<dbReference type="EMBL" id="AY840980">
    <property type="protein sequence ID" value="AAW27917.1"/>
    <property type="molecule type" value="mRNA"/>
</dbReference>
<dbReference type="SMR" id="Q5MBA8"/>
<dbReference type="GlyCosmos" id="Q5MBA8">
    <property type="glycosylation" value="1 site, No reported glycans"/>
</dbReference>
<dbReference type="GO" id="GO:0005615">
    <property type="term" value="C:extracellular space"/>
    <property type="evidence" value="ECO:0007669"/>
    <property type="project" value="UniProtKB-KW"/>
</dbReference>
<dbReference type="GO" id="GO:0005125">
    <property type="term" value="F:cytokine activity"/>
    <property type="evidence" value="ECO:0007669"/>
    <property type="project" value="UniProtKB-KW"/>
</dbReference>
<dbReference type="GO" id="GO:0008083">
    <property type="term" value="F:growth factor activity"/>
    <property type="evidence" value="ECO:0007669"/>
    <property type="project" value="UniProtKB-KW"/>
</dbReference>
<dbReference type="GO" id="GO:0005134">
    <property type="term" value="F:interleukin-2 receptor binding"/>
    <property type="evidence" value="ECO:0007669"/>
    <property type="project" value="InterPro"/>
</dbReference>
<dbReference type="GO" id="GO:0002250">
    <property type="term" value="P:adaptive immune response"/>
    <property type="evidence" value="ECO:0007669"/>
    <property type="project" value="UniProtKB-KW"/>
</dbReference>
<dbReference type="Gene3D" id="1.20.1250.10">
    <property type="match status" value="1"/>
</dbReference>
<dbReference type="InterPro" id="IPR009079">
    <property type="entry name" value="4_helix_cytokine-like_core"/>
</dbReference>
<dbReference type="InterPro" id="IPR000779">
    <property type="entry name" value="IL-2"/>
</dbReference>
<dbReference type="InterPro" id="IPR030477">
    <property type="entry name" value="IL-2_CS"/>
</dbReference>
<dbReference type="PANTHER" id="PTHR48487">
    <property type="entry name" value="INTERLEUKIN-2"/>
    <property type="match status" value="1"/>
</dbReference>
<dbReference type="PANTHER" id="PTHR48487:SF1">
    <property type="entry name" value="INTERLEUKIN-2"/>
    <property type="match status" value="1"/>
</dbReference>
<dbReference type="Pfam" id="PF00715">
    <property type="entry name" value="IL2"/>
    <property type="match status" value="1"/>
</dbReference>
<dbReference type="PRINTS" id="PR00265">
    <property type="entry name" value="INTERLEUKIN2"/>
</dbReference>
<dbReference type="SMART" id="SM00189">
    <property type="entry name" value="IL2"/>
    <property type="match status" value="1"/>
</dbReference>
<dbReference type="SUPFAM" id="SSF47266">
    <property type="entry name" value="4-helical cytokines"/>
    <property type="match status" value="1"/>
</dbReference>
<dbReference type="PROSITE" id="PS00424">
    <property type="entry name" value="INTERLEUKIN_2"/>
    <property type="match status" value="1"/>
</dbReference>
<name>IL2_MOSBE</name>
<feature type="signal peptide" evidence="1">
    <location>
        <begin position="1"/>
        <end position="20"/>
    </location>
</feature>
<feature type="chain" id="PRO_0000015492" description="Interleukin-2">
    <location>
        <begin position="21"/>
        <end position="155"/>
    </location>
</feature>
<feature type="glycosylation site" description="O-linked (GalNAc...) threonine" evidence="1">
    <location>
        <position position="23"/>
    </location>
</feature>
<feature type="disulfide bond" evidence="1">
    <location>
        <begin position="79"/>
        <end position="127"/>
    </location>
</feature>
<keyword id="KW-1064">Adaptive immunity</keyword>
<keyword id="KW-0202">Cytokine</keyword>
<keyword id="KW-1015">Disulfide bond</keyword>
<keyword id="KW-0325">Glycoprotein</keyword>
<keyword id="KW-0339">Growth factor</keyword>
<keyword id="KW-0391">Immunity</keyword>
<keyword id="KW-0964">Secreted</keyword>
<keyword id="KW-0732">Signal</keyword>
<sequence>MYKIQLLSCIALTLALVANGAPTSSSTGNTMKEVKSLLLDLQLLLEKVKNPENLKLSRMHTFNFYVPKVNSTELKHLKCLLEELKLLEEVLNLAPSKNLNLREIKDSMDNIKRIVLELQGSETTFTCEYDNATVKAAEFLNKWITFCQSIYSTMT</sequence>
<accession>Q5MBA8</accession>
<gene>
    <name type="primary">IL2</name>
</gene>
<protein>
    <recommendedName>
        <fullName>Interleukin-2</fullName>
        <shortName>IL-2</shortName>
    </recommendedName>
    <alternativeName>
        <fullName>T-cell growth factor</fullName>
        <shortName>TCGF</shortName>
    </alternativeName>
</protein>
<reference key="1">
    <citation type="submission" date="2004-11" db="EMBL/GenBank/DDBJ databases">
        <title>Cloning and expression of interleukin-2 cDNAs from musk deer.</title>
        <authorList>
            <person name="Lai B."/>
            <person name="Zou F."/>
            <person name="Yue B."/>
        </authorList>
    </citation>
    <scope>NUCLEOTIDE SEQUENCE [MRNA]</scope>
</reference>
<comment type="function">
    <text evidence="2">Cytokine produced by activated CD4-positive helper T-cells and to a lesser extend activated CD8-positive T-cells and natural killer (NK) cells that plays pivotal roles in the immune response and tolerance. Binds to a receptor complex composed of either the high-affinity trimeric IL-2R (IL2RA/CD25, IL2RB/CD122 and IL2RG/CD132) or the low-affinity dimeric IL-2R (IL2RB and IL2RG). Interaction with the receptor leads to oligomerization and conformation changes in the IL-2R subunits resulting in downstream signaling starting with phosphorylation of JAK1 and JAK3. In turn, JAK1 and JAK3 phosphorylate the receptor to form a docking site leading to the phosphorylation of several substrates including STAT5. This process leads to activation of several pathways including STAT, phosphoinositide-3-kinase/PI3K and mitogen-activated protein kinase/MAPK pathways. Functions as a T-cell growth factor and can increase NK-cell cytolytic activity as well. Promotes strong proliferation of activated B-cells and subsequently immunoglobulin production. Plays a pivotal role in regulating the adaptive immune system by controlling the survival and proliferation of regulatory T-cells, which are required for the maintenance of immune tolerance. Moreover, participates in the differentiation and homeostasis of effector T-cell subsets, including Th1, Th2, Th17 as well as memory CD8-positive T-cells.</text>
</comment>
<comment type="subcellular location">
    <subcellularLocation>
        <location evidence="1">Secreted</location>
    </subcellularLocation>
</comment>
<comment type="similarity">
    <text evidence="3">Belongs to the IL-2 family.</text>
</comment>
<evidence type="ECO:0000250" key="1"/>
<evidence type="ECO:0000250" key="2">
    <source>
        <dbReference type="UniProtKB" id="P60568"/>
    </source>
</evidence>
<evidence type="ECO:0000305" key="3"/>